<proteinExistence type="inferred from homology"/>
<keyword id="KW-1003">Cell membrane</keyword>
<keyword id="KW-0472">Membrane</keyword>
<keyword id="KW-0534">Nitrate assimilation</keyword>
<keyword id="KW-0812">Transmembrane</keyword>
<keyword id="KW-1133">Transmembrane helix</keyword>
<keyword id="KW-0813">Transport</keyword>
<feature type="chain" id="PRO_0000349387" description="Probable nitrate transporter NarT">
    <location>
        <begin position="1"/>
        <end position="389"/>
    </location>
</feature>
<feature type="transmembrane region" description="Helical" evidence="2">
    <location>
        <begin position="14"/>
        <end position="34"/>
    </location>
</feature>
<feature type="transmembrane region" description="Helical" evidence="2">
    <location>
        <begin position="45"/>
        <end position="65"/>
    </location>
</feature>
<feature type="transmembrane region" description="Helical" evidence="2">
    <location>
        <begin position="69"/>
        <end position="89"/>
    </location>
</feature>
<feature type="transmembrane region" description="Helical" evidence="2">
    <location>
        <begin position="97"/>
        <end position="117"/>
    </location>
</feature>
<feature type="transmembrane region" description="Helical" evidence="2">
    <location>
        <begin position="139"/>
        <end position="159"/>
    </location>
</feature>
<feature type="transmembrane region" description="Helical" evidence="2">
    <location>
        <begin position="161"/>
        <end position="181"/>
    </location>
</feature>
<feature type="transmembrane region" description="Helical" evidence="2">
    <location>
        <begin position="211"/>
        <end position="231"/>
    </location>
</feature>
<feature type="transmembrane region" description="Helical" evidence="2">
    <location>
        <begin position="246"/>
        <end position="266"/>
    </location>
</feature>
<feature type="transmembrane region" description="Helical" evidence="2">
    <location>
        <begin position="268"/>
        <end position="288"/>
    </location>
</feature>
<feature type="transmembrane region" description="Helical" evidence="2">
    <location>
        <begin position="294"/>
        <end position="314"/>
    </location>
</feature>
<feature type="transmembrane region" description="Helical" evidence="2">
    <location>
        <begin position="331"/>
        <end position="351"/>
    </location>
</feature>
<feature type="transmembrane region" description="Helical" evidence="2">
    <location>
        <begin position="353"/>
        <end position="373"/>
    </location>
</feature>
<comment type="function">
    <text evidence="1">Probably required for nitrate uptake under anoxic conditions. Also possibly involved in excretion of nitrite produced by the dissimilatory reduction of nitrate (By similarity).</text>
</comment>
<comment type="subcellular location">
    <subcellularLocation>
        <location evidence="3">Cell membrane</location>
        <topology evidence="3">Multi-pass membrane protein</topology>
    </subcellularLocation>
</comment>
<comment type="induction">
    <text evidence="1">Positively regulated by the two-component system NreB/NreC.</text>
</comment>
<comment type="similarity">
    <text evidence="3">Belongs to the major facilitator superfamily. Nitrate/nitrite porter (TC 2.A.1.8) family.</text>
</comment>
<protein>
    <recommendedName>
        <fullName>Probable nitrate transporter NarT</fullName>
    </recommendedName>
</protein>
<name>NART_STAAC</name>
<evidence type="ECO:0000250" key="1"/>
<evidence type="ECO:0000255" key="2"/>
<evidence type="ECO:0000305" key="3"/>
<reference key="1">
    <citation type="journal article" date="2005" name="J. Bacteriol.">
        <title>Insights on evolution of virulence and resistance from the complete genome analysis of an early methicillin-resistant Staphylococcus aureus strain and a biofilm-producing methicillin-resistant Staphylococcus epidermidis strain.</title>
        <authorList>
            <person name="Gill S.R."/>
            <person name="Fouts D.E."/>
            <person name="Archer G.L."/>
            <person name="Mongodin E.F."/>
            <person name="DeBoy R.T."/>
            <person name="Ravel J."/>
            <person name="Paulsen I.T."/>
            <person name="Kolonay J.F."/>
            <person name="Brinkac L.M."/>
            <person name="Beanan M.J."/>
            <person name="Dodson R.J."/>
            <person name="Daugherty S.C."/>
            <person name="Madupu R."/>
            <person name="Angiuoli S.V."/>
            <person name="Durkin A.S."/>
            <person name="Haft D.H."/>
            <person name="Vamathevan J.J."/>
            <person name="Khouri H."/>
            <person name="Utterback T.R."/>
            <person name="Lee C."/>
            <person name="Dimitrov G."/>
            <person name="Jiang L."/>
            <person name="Qin H."/>
            <person name="Weidman J."/>
            <person name="Tran K."/>
            <person name="Kang K.H."/>
            <person name="Hance I.R."/>
            <person name="Nelson K.E."/>
            <person name="Fraser C.M."/>
        </authorList>
    </citation>
    <scope>NUCLEOTIDE SEQUENCE [LARGE SCALE GENOMIC DNA]</scope>
    <source>
        <strain>COL</strain>
    </source>
</reference>
<sequence length="389" mass="42148">MYKTKGGFQLTLQTLSLVVGFMAWSIIAPLMPFIKQDVNVTEGQISIILAIPVILGSVLRVPFGYLTNIVGAKWVFFTSFIVLLFPIFFLSQAQTPGMLMASGFFLGVGGAIFSVGVTSVPKYFPKEKVGLANGIYGMGNIGTAVSSFLAPPIAGIIGWQTTVRSYLIIIALFALIMFIFGDTQERKIKVPLMAQMKTLSKNYKLYYLSYWYFITFGAFVAFGIFLPNYLVNHFGIDKVDAGIRSGVFIALATFLRPIGGILGDKFNAVKVLMIDFVVMIIGAIILGISDHIALFTVGCLTISICAGIGNGLIFKLVPSYFLNEAGSANGIVSMMGGLGGFFPPLVITYVANLTGSSHLAFIFLAVFGCIALFTMRHLYQKEYGSLKNG</sequence>
<accession>Q5HDG7</accession>
<dbReference type="EMBL" id="CP000046">
    <property type="protein sequence ID" value="AAW37212.1"/>
    <property type="molecule type" value="Genomic_DNA"/>
</dbReference>
<dbReference type="RefSeq" id="WP_000278558.1">
    <property type="nucleotide sequence ID" value="NZ_JBGOFO010000004.1"/>
</dbReference>
<dbReference type="SMR" id="Q5HDG7"/>
<dbReference type="KEGG" id="sac:SACOL2386"/>
<dbReference type="HOGENOM" id="CLU_001265_14_0_9"/>
<dbReference type="Proteomes" id="UP000000530">
    <property type="component" value="Chromosome"/>
</dbReference>
<dbReference type="GO" id="GO:0005886">
    <property type="term" value="C:plasma membrane"/>
    <property type="evidence" value="ECO:0007669"/>
    <property type="project" value="UniProtKB-SubCell"/>
</dbReference>
<dbReference type="GO" id="GO:0015112">
    <property type="term" value="F:nitrate transmembrane transporter activity"/>
    <property type="evidence" value="ECO:0007669"/>
    <property type="project" value="InterPro"/>
</dbReference>
<dbReference type="GO" id="GO:0042128">
    <property type="term" value="P:nitrate assimilation"/>
    <property type="evidence" value="ECO:0007669"/>
    <property type="project" value="UniProtKB-KW"/>
</dbReference>
<dbReference type="CDD" id="cd17341">
    <property type="entry name" value="MFS_NRT2_like"/>
    <property type="match status" value="1"/>
</dbReference>
<dbReference type="Gene3D" id="1.20.1250.20">
    <property type="entry name" value="MFS general substrate transporter like domains"/>
    <property type="match status" value="2"/>
</dbReference>
<dbReference type="InterPro" id="IPR011701">
    <property type="entry name" value="MFS"/>
</dbReference>
<dbReference type="InterPro" id="IPR020846">
    <property type="entry name" value="MFS_dom"/>
</dbReference>
<dbReference type="InterPro" id="IPR036259">
    <property type="entry name" value="MFS_trans_sf"/>
</dbReference>
<dbReference type="InterPro" id="IPR044772">
    <property type="entry name" value="NO3_transporter"/>
</dbReference>
<dbReference type="PANTHER" id="PTHR23515">
    <property type="entry name" value="HIGH-AFFINITY NITRATE TRANSPORTER 2.3"/>
    <property type="match status" value="1"/>
</dbReference>
<dbReference type="Pfam" id="PF07690">
    <property type="entry name" value="MFS_1"/>
    <property type="match status" value="1"/>
</dbReference>
<dbReference type="SUPFAM" id="SSF103473">
    <property type="entry name" value="MFS general substrate transporter"/>
    <property type="match status" value="1"/>
</dbReference>
<dbReference type="PROSITE" id="PS50850">
    <property type="entry name" value="MFS"/>
    <property type="match status" value="1"/>
</dbReference>
<organism>
    <name type="scientific">Staphylococcus aureus (strain COL)</name>
    <dbReference type="NCBI Taxonomy" id="93062"/>
    <lineage>
        <taxon>Bacteria</taxon>
        <taxon>Bacillati</taxon>
        <taxon>Bacillota</taxon>
        <taxon>Bacilli</taxon>
        <taxon>Bacillales</taxon>
        <taxon>Staphylococcaceae</taxon>
        <taxon>Staphylococcus</taxon>
    </lineage>
</organism>
<gene>
    <name type="primary">narT</name>
    <name type="synonym">narK</name>
    <name type="ordered locus">SACOL2386</name>
</gene>